<protein>
    <recommendedName>
        <fullName evidence="1">Phosphoribosylformylglycinamidine cyclo-ligase</fullName>
        <ecNumber evidence="1">6.3.3.1</ecNumber>
    </recommendedName>
    <alternativeName>
        <fullName evidence="1">AIR synthase</fullName>
    </alternativeName>
    <alternativeName>
        <fullName evidence="1">AIRS</fullName>
    </alternativeName>
    <alternativeName>
        <fullName evidence="1">Phosphoribosyl-aminoimidazole synthetase</fullName>
    </alternativeName>
</protein>
<keyword id="KW-0067">ATP-binding</keyword>
<keyword id="KW-0963">Cytoplasm</keyword>
<keyword id="KW-0436">Ligase</keyword>
<keyword id="KW-0547">Nucleotide-binding</keyword>
<keyword id="KW-0658">Purine biosynthesis</keyword>
<accession>B0URN5</accession>
<dbReference type="EC" id="6.3.3.1" evidence="1"/>
<dbReference type="EMBL" id="CP000947">
    <property type="protein sequence ID" value="ACA32119.1"/>
    <property type="molecule type" value="Genomic_DNA"/>
</dbReference>
<dbReference type="RefSeq" id="WP_012341311.1">
    <property type="nucleotide sequence ID" value="NC_010519.1"/>
</dbReference>
<dbReference type="SMR" id="B0URN5"/>
<dbReference type="STRING" id="228400.HSM_0473"/>
<dbReference type="GeneID" id="31486756"/>
<dbReference type="KEGG" id="hsm:HSM_0473"/>
<dbReference type="HOGENOM" id="CLU_047116_0_0_6"/>
<dbReference type="UniPathway" id="UPA00074">
    <property type="reaction ID" value="UER00129"/>
</dbReference>
<dbReference type="GO" id="GO:0005829">
    <property type="term" value="C:cytosol"/>
    <property type="evidence" value="ECO:0007669"/>
    <property type="project" value="TreeGrafter"/>
</dbReference>
<dbReference type="GO" id="GO:0005524">
    <property type="term" value="F:ATP binding"/>
    <property type="evidence" value="ECO:0007669"/>
    <property type="project" value="UniProtKB-KW"/>
</dbReference>
<dbReference type="GO" id="GO:0004637">
    <property type="term" value="F:phosphoribosylamine-glycine ligase activity"/>
    <property type="evidence" value="ECO:0007669"/>
    <property type="project" value="TreeGrafter"/>
</dbReference>
<dbReference type="GO" id="GO:0004641">
    <property type="term" value="F:phosphoribosylformylglycinamidine cyclo-ligase activity"/>
    <property type="evidence" value="ECO:0007669"/>
    <property type="project" value="UniProtKB-UniRule"/>
</dbReference>
<dbReference type="GO" id="GO:0006189">
    <property type="term" value="P:'de novo' IMP biosynthetic process"/>
    <property type="evidence" value="ECO:0007669"/>
    <property type="project" value="UniProtKB-UniRule"/>
</dbReference>
<dbReference type="GO" id="GO:0046084">
    <property type="term" value="P:adenine biosynthetic process"/>
    <property type="evidence" value="ECO:0007669"/>
    <property type="project" value="TreeGrafter"/>
</dbReference>
<dbReference type="CDD" id="cd02196">
    <property type="entry name" value="PurM"/>
    <property type="match status" value="1"/>
</dbReference>
<dbReference type="FunFam" id="3.30.1330.10:FF:000001">
    <property type="entry name" value="Phosphoribosylformylglycinamidine cyclo-ligase"/>
    <property type="match status" value="1"/>
</dbReference>
<dbReference type="FunFam" id="3.90.650.10:FF:000001">
    <property type="entry name" value="Phosphoribosylformylglycinamidine cyclo-ligase"/>
    <property type="match status" value="1"/>
</dbReference>
<dbReference type="Gene3D" id="3.90.650.10">
    <property type="entry name" value="PurM-like C-terminal domain"/>
    <property type="match status" value="1"/>
</dbReference>
<dbReference type="Gene3D" id="3.30.1330.10">
    <property type="entry name" value="PurM-like, N-terminal domain"/>
    <property type="match status" value="1"/>
</dbReference>
<dbReference type="HAMAP" id="MF_00741">
    <property type="entry name" value="AIRS"/>
    <property type="match status" value="1"/>
</dbReference>
<dbReference type="InterPro" id="IPR010918">
    <property type="entry name" value="PurM-like_C_dom"/>
</dbReference>
<dbReference type="InterPro" id="IPR036676">
    <property type="entry name" value="PurM-like_C_sf"/>
</dbReference>
<dbReference type="InterPro" id="IPR016188">
    <property type="entry name" value="PurM-like_N"/>
</dbReference>
<dbReference type="InterPro" id="IPR036921">
    <property type="entry name" value="PurM-like_N_sf"/>
</dbReference>
<dbReference type="InterPro" id="IPR004733">
    <property type="entry name" value="PurM_cligase"/>
</dbReference>
<dbReference type="NCBIfam" id="TIGR00878">
    <property type="entry name" value="purM"/>
    <property type="match status" value="1"/>
</dbReference>
<dbReference type="PANTHER" id="PTHR10520:SF12">
    <property type="entry name" value="TRIFUNCTIONAL PURINE BIOSYNTHETIC PROTEIN ADENOSINE-3"/>
    <property type="match status" value="1"/>
</dbReference>
<dbReference type="PANTHER" id="PTHR10520">
    <property type="entry name" value="TRIFUNCTIONAL PURINE BIOSYNTHETIC PROTEIN ADENOSINE-3-RELATED"/>
    <property type="match status" value="1"/>
</dbReference>
<dbReference type="Pfam" id="PF00586">
    <property type="entry name" value="AIRS"/>
    <property type="match status" value="1"/>
</dbReference>
<dbReference type="Pfam" id="PF02769">
    <property type="entry name" value="AIRS_C"/>
    <property type="match status" value="1"/>
</dbReference>
<dbReference type="SUPFAM" id="SSF56042">
    <property type="entry name" value="PurM C-terminal domain-like"/>
    <property type="match status" value="1"/>
</dbReference>
<dbReference type="SUPFAM" id="SSF55326">
    <property type="entry name" value="PurM N-terminal domain-like"/>
    <property type="match status" value="1"/>
</dbReference>
<organism>
    <name type="scientific">Histophilus somni (strain 2336)</name>
    <name type="common">Haemophilus somnus</name>
    <dbReference type="NCBI Taxonomy" id="228400"/>
    <lineage>
        <taxon>Bacteria</taxon>
        <taxon>Pseudomonadati</taxon>
        <taxon>Pseudomonadota</taxon>
        <taxon>Gammaproteobacteria</taxon>
        <taxon>Pasteurellales</taxon>
        <taxon>Pasteurellaceae</taxon>
        <taxon>Histophilus</taxon>
    </lineage>
</organism>
<proteinExistence type="inferred from homology"/>
<comment type="catalytic activity">
    <reaction evidence="1">
        <text>2-formamido-N(1)-(5-O-phospho-beta-D-ribosyl)acetamidine + ATP = 5-amino-1-(5-phospho-beta-D-ribosyl)imidazole + ADP + phosphate + H(+)</text>
        <dbReference type="Rhea" id="RHEA:23032"/>
        <dbReference type="ChEBI" id="CHEBI:15378"/>
        <dbReference type="ChEBI" id="CHEBI:30616"/>
        <dbReference type="ChEBI" id="CHEBI:43474"/>
        <dbReference type="ChEBI" id="CHEBI:137981"/>
        <dbReference type="ChEBI" id="CHEBI:147287"/>
        <dbReference type="ChEBI" id="CHEBI:456216"/>
        <dbReference type="EC" id="6.3.3.1"/>
    </reaction>
</comment>
<comment type="pathway">
    <text evidence="1">Purine metabolism; IMP biosynthesis via de novo pathway; 5-amino-1-(5-phospho-D-ribosyl)imidazole from N(2)-formyl-N(1)-(5-phospho-D-ribosyl)glycinamide: step 2/2.</text>
</comment>
<comment type="subcellular location">
    <subcellularLocation>
        <location evidence="1">Cytoplasm</location>
    </subcellularLocation>
</comment>
<comment type="similarity">
    <text evidence="1">Belongs to the AIR synthase family.</text>
</comment>
<feature type="chain" id="PRO_1000083460" description="Phosphoribosylformylglycinamidine cyclo-ligase">
    <location>
        <begin position="1"/>
        <end position="345"/>
    </location>
</feature>
<reference key="1">
    <citation type="submission" date="2008-02" db="EMBL/GenBank/DDBJ databases">
        <title>Complete sequence of Haemophilus somnus 2336.</title>
        <authorList>
            <consortium name="US DOE Joint Genome Institute"/>
            <person name="Siddaramappa S."/>
            <person name="Duncan A.J."/>
            <person name="Challacombe J.F."/>
            <person name="Rainey D."/>
            <person name="Gillaspy A.F."/>
            <person name="Carson M."/>
            <person name="Gipson J."/>
            <person name="Gipson M."/>
            <person name="Bruce D."/>
            <person name="Detter J.C."/>
            <person name="Han C.S."/>
            <person name="Land M."/>
            <person name="Tapia R."/>
            <person name="Thompson L.S."/>
            <person name="Orvis J."/>
            <person name="Zaitshik J."/>
            <person name="Barnes G."/>
            <person name="Brettin T.S."/>
            <person name="Dyer D.W."/>
            <person name="Inzana T.J."/>
        </authorList>
    </citation>
    <scope>NUCLEOTIDE SEQUENCE [LARGE SCALE GENOMIC DNA]</scope>
    <source>
        <strain>2336</strain>
    </source>
</reference>
<name>PUR5_HISS2</name>
<gene>
    <name evidence="1" type="primary">purM</name>
    <name type="ordered locus">HSM_0473</name>
</gene>
<sequence length="345" mass="37079">MSKQSLSYKDAGVDINAGNTLVERIKSDVKRTTRPEVIGGLGGFGALCALPSKYKDPILVSGTDGVGTKLRLAIDLKKHDTIGVDLVAMCVNDLVVQGAEPLFFLDYYATGKLDVDVAADVIKGIADGCVQAGCALVGGETAEMPGMYHTGDYDLAGFCVGVVEKSEIIDGSNVKAGDALLALASSGPHSNGYSLIRKVIEVSGIDPTTAQLAEHSFAEQVLAPTKIYVKPVLQLIKHTDVHAICHLTGGGFWENIPRVLPSSVKAVINEKSWEWHPIFKWLQEQGNIDRYEMYRTFNCGVGMIIALPQEDVETALALLQQVGEKAWVIGKIEHANADEEKVVIC</sequence>
<evidence type="ECO:0000255" key="1">
    <source>
        <dbReference type="HAMAP-Rule" id="MF_00741"/>
    </source>
</evidence>